<keyword id="KW-0066">ATP synthesis</keyword>
<keyword id="KW-0997">Cell inner membrane</keyword>
<keyword id="KW-1003">Cell membrane</keyword>
<keyword id="KW-0139">CF(1)</keyword>
<keyword id="KW-0375">Hydrogen ion transport</keyword>
<keyword id="KW-0406">Ion transport</keyword>
<keyword id="KW-0472">Membrane</keyword>
<keyword id="KW-1185">Reference proteome</keyword>
<keyword id="KW-0813">Transport</keyword>
<accession>Q8F2J6</accession>
<name>ATPE_LEPIN</name>
<dbReference type="EMBL" id="AE010300">
    <property type="protein sequence ID" value="AAN49974.1"/>
    <property type="molecule type" value="Genomic_DNA"/>
</dbReference>
<dbReference type="RefSeq" id="NP_712956.1">
    <property type="nucleotide sequence ID" value="NC_004342.2"/>
</dbReference>
<dbReference type="RefSeq" id="WP_001275641.1">
    <property type="nucleotide sequence ID" value="NC_004342.2"/>
</dbReference>
<dbReference type="SMR" id="Q8F2J6"/>
<dbReference type="FunCoup" id="Q8F2J6">
    <property type="interactions" value="349"/>
</dbReference>
<dbReference type="STRING" id="189518.LA_2775"/>
<dbReference type="PaxDb" id="189518-LA_2775"/>
<dbReference type="EnsemblBacteria" id="AAN49974">
    <property type="protein sequence ID" value="AAN49974"/>
    <property type="gene ID" value="LA_2775"/>
</dbReference>
<dbReference type="GeneID" id="61144561"/>
<dbReference type="KEGG" id="lil:LA_2775"/>
<dbReference type="PATRIC" id="fig|189518.3.peg.2757"/>
<dbReference type="HOGENOM" id="CLU_084338_2_1_12"/>
<dbReference type="InParanoid" id="Q8F2J6"/>
<dbReference type="OrthoDB" id="9804110at2"/>
<dbReference type="Proteomes" id="UP000001408">
    <property type="component" value="Chromosome I"/>
</dbReference>
<dbReference type="GO" id="GO:0005886">
    <property type="term" value="C:plasma membrane"/>
    <property type="evidence" value="ECO:0007669"/>
    <property type="project" value="UniProtKB-SubCell"/>
</dbReference>
<dbReference type="GO" id="GO:0045259">
    <property type="term" value="C:proton-transporting ATP synthase complex"/>
    <property type="evidence" value="ECO:0007669"/>
    <property type="project" value="UniProtKB-KW"/>
</dbReference>
<dbReference type="GO" id="GO:0005524">
    <property type="term" value="F:ATP binding"/>
    <property type="evidence" value="ECO:0007669"/>
    <property type="project" value="UniProtKB-UniRule"/>
</dbReference>
<dbReference type="GO" id="GO:0046933">
    <property type="term" value="F:proton-transporting ATP synthase activity, rotational mechanism"/>
    <property type="evidence" value="ECO:0007669"/>
    <property type="project" value="UniProtKB-UniRule"/>
</dbReference>
<dbReference type="GO" id="GO:0015986">
    <property type="term" value="P:proton motive force-driven ATP synthesis"/>
    <property type="evidence" value="ECO:0000318"/>
    <property type="project" value="GO_Central"/>
</dbReference>
<dbReference type="CDD" id="cd12152">
    <property type="entry name" value="F1-ATPase_delta"/>
    <property type="match status" value="1"/>
</dbReference>
<dbReference type="Gene3D" id="2.60.15.10">
    <property type="entry name" value="F0F1 ATP synthase delta/epsilon subunit, N-terminal"/>
    <property type="match status" value="1"/>
</dbReference>
<dbReference type="HAMAP" id="MF_00530">
    <property type="entry name" value="ATP_synth_epsil_bac"/>
    <property type="match status" value="1"/>
</dbReference>
<dbReference type="InterPro" id="IPR001469">
    <property type="entry name" value="ATP_synth_F1_dsu/esu"/>
</dbReference>
<dbReference type="InterPro" id="IPR020546">
    <property type="entry name" value="ATP_synth_F1_dsu/esu_N"/>
</dbReference>
<dbReference type="InterPro" id="IPR036771">
    <property type="entry name" value="ATPsynth_dsu/esu_N"/>
</dbReference>
<dbReference type="NCBIfam" id="TIGR01216">
    <property type="entry name" value="ATP_synt_epsi"/>
    <property type="match status" value="1"/>
</dbReference>
<dbReference type="NCBIfam" id="NF009979">
    <property type="entry name" value="PRK13444.1"/>
    <property type="match status" value="1"/>
</dbReference>
<dbReference type="PANTHER" id="PTHR13822">
    <property type="entry name" value="ATP SYNTHASE DELTA/EPSILON CHAIN"/>
    <property type="match status" value="1"/>
</dbReference>
<dbReference type="PANTHER" id="PTHR13822:SF10">
    <property type="entry name" value="ATP SYNTHASE EPSILON CHAIN, CHLOROPLASTIC"/>
    <property type="match status" value="1"/>
</dbReference>
<dbReference type="Pfam" id="PF02823">
    <property type="entry name" value="ATP-synt_DE_N"/>
    <property type="match status" value="1"/>
</dbReference>
<dbReference type="SUPFAM" id="SSF51344">
    <property type="entry name" value="Epsilon subunit of F1F0-ATP synthase N-terminal domain"/>
    <property type="match status" value="1"/>
</dbReference>
<organism>
    <name type="scientific">Leptospira interrogans serogroup Icterohaemorrhagiae serovar Lai (strain 56601)</name>
    <dbReference type="NCBI Taxonomy" id="189518"/>
    <lineage>
        <taxon>Bacteria</taxon>
        <taxon>Pseudomonadati</taxon>
        <taxon>Spirochaetota</taxon>
        <taxon>Spirochaetia</taxon>
        <taxon>Leptospirales</taxon>
        <taxon>Leptospiraceae</taxon>
        <taxon>Leptospira</taxon>
    </lineage>
</organism>
<evidence type="ECO:0000255" key="1">
    <source>
        <dbReference type="HAMAP-Rule" id="MF_00530"/>
    </source>
</evidence>
<comment type="function">
    <text evidence="1">Produces ATP from ADP in the presence of a proton gradient across the membrane.</text>
</comment>
<comment type="subunit">
    <text>F-type ATPases have 2 components, CF(1) - the catalytic core - and CF(0) - the membrane proton channel. CF(1) has five subunits: alpha(3), beta(3), gamma(1), delta(1), epsilon(1). CF(0) has three main subunits: a, b and c.</text>
</comment>
<comment type="subcellular location">
    <subcellularLocation>
        <location evidence="1">Cell inner membrane</location>
        <topology evidence="1">Peripheral membrane protein</topology>
    </subcellularLocation>
</comment>
<comment type="similarity">
    <text evidence="1">Belongs to the ATPase epsilon chain family.</text>
</comment>
<sequence>MSANKLKVSVISPEKILYKGEVDSLIVPGSEGFFGILPNHAPLVATLGIGILEIRKGEKLKVLSVEGGFVEIKDNSISILTDHGALKEDIDLEVEKKNLAEAEKLPPSDSKNLFLQKTKTRILVASR</sequence>
<reference key="1">
    <citation type="journal article" date="2003" name="Nature">
        <title>Unique physiological and pathogenic features of Leptospira interrogans revealed by whole-genome sequencing.</title>
        <authorList>
            <person name="Ren S.-X."/>
            <person name="Fu G."/>
            <person name="Jiang X.-G."/>
            <person name="Zeng R."/>
            <person name="Miao Y.-G."/>
            <person name="Xu H."/>
            <person name="Zhang Y.-X."/>
            <person name="Xiong H."/>
            <person name="Lu G."/>
            <person name="Lu L.-F."/>
            <person name="Jiang H.-Q."/>
            <person name="Jia J."/>
            <person name="Tu Y.-F."/>
            <person name="Jiang J.-X."/>
            <person name="Gu W.-Y."/>
            <person name="Zhang Y.-Q."/>
            <person name="Cai Z."/>
            <person name="Sheng H.-H."/>
            <person name="Yin H.-F."/>
            <person name="Zhang Y."/>
            <person name="Zhu G.-F."/>
            <person name="Wan M."/>
            <person name="Huang H.-L."/>
            <person name="Qian Z."/>
            <person name="Wang S.-Y."/>
            <person name="Ma W."/>
            <person name="Yao Z.-J."/>
            <person name="Shen Y."/>
            <person name="Qiang B.-Q."/>
            <person name="Xia Q.-C."/>
            <person name="Guo X.-K."/>
            <person name="Danchin A."/>
            <person name="Saint Girons I."/>
            <person name="Somerville R.L."/>
            <person name="Wen Y.-M."/>
            <person name="Shi M.-H."/>
            <person name="Chen Z."/>
            <person name="Xu J.-G."/>
            <person name="Zhao G.-P."/>
        </authorList>
    </citation>
    <scope>NUCLEOTIDE SEQUENCE [LARGE SCALE GENOMIC DNA]</scope>
    <source>
        <strain>56601</strain>
    </source>
</reference>
<gene>
    <name evidence="1" type="primary">atpC</name>
    <name type="ordered locus">LA_2775</name>
</gene>
<proteinExistence type="inferred from homology"/>
<feature type="chain" id="PRO_0000188151" description="ATP synthase epsilon chain">
    <location>
        <begin position="1"/>
        <end position="127"/>
    </location>
</feature>
<protein>
    <recommendedName>
        <fullName evidence="1">ATP synthase epsilon chain</fullName>
    </recommendedName>
    <alternativeName>
        <fullName evidence="1">ATP synthase F1 sector epsilon subunit</fullName>
    </alternativeName>
    <alternativeName>
        <fullName evidence="1">F-ATPase epsilon subunit</fullName>
    </alternativeName>
</protein>